<protein>
    <recommendedName>
        <fullName evidence="1">Probable tRNA sulfurtransferase</fullName>
        <ecNumber evidence="1">2.8.1.4</ecNumber>
    </recommendedName>
    <alternativeName>
        <fullName evidence="1">Sulfur carrier protein ThiS sulfurtransferase</fullName>
    </alternativeName>
    <alternativeName>
        <fullName evidence="1">Thiamine biosynthesis protein ThiI</fullName>
    </alternativeName>
    <alternativeName>
        <fullName evidence="1">tRNA 4-thiouridine synthase</fullName>
    </alternativeName>
</protein>
<feature type="chain" id="PRO_1000116395" description="Probable tRNA sulfurtransferase">
    <location>
        <begin position="1"/>
        <end position="404"/>
    </location>
</feature>
<feature type="domain" description="THUMP" evidence="1">
    <location>
        <begin position="61"/>
        <end position="166"/>
    </location>
</feature>
<feature type="binding site" evidence="1">
    <location>
        <begin position="184"/>
        <end position="185"/>
    </location>
    <ligand>
        <name>ATP</name>
        <dbReference type="ChEBI" id="CHEBI:30616"/>
    </ligand>
</feature>
<feature type="binding site" evidence="1">
    <location>
        <begin position="209"/>
        <end position="210"/>
    </location>
    <ligand>
        <name>ATP</name>
        <dbReference type="ChEBI" id="CHEBI:30616"/>
    </ligand>
</feature>
<feature type="binding site" evidence="1">
    <location>
        <position position="266"/>
    </location>
    <ligand>
        <name>ATP</name>
        <dbReference type="ChEBI" id="CHEBI:30616"/>
    </ligand>
</feature>
<feature type="binding site" evidence="1">
    <location>
        <position position="288"/>
    </location>
    <ligand>
        <name>ATP</name>
        <dbReference type="ChEBI" id="CHEBI:30616"/>
    </ligand>
</feature>
<feature type="binding site" evidence="1">
    <location>
        <position position="297"/>
    </location>
    <ligand>
        <name>ATP</name>
        <dbReference type="ChEBI" id="CHEBI:30616"/>
    </ligand>
</feature>
<name>THII_BACC0</name>
<comment type="function">
    <text evidence="1">Catalyzes the ATP-dependent transfer of a sulfur to tRNA to produce 4-thiouridine in position 8 of tRNAs, which functions as a near-UV photosensor. Also catalyzes the transfer of sulfur to the sulfur carrier protein ThiS, forming ThiS-thiocarboxylate. This is a step in the synthesis of thiazole, in the thiamine biosynthesis pathway. The sulfur is donated as persulfide by IscS.</text>
</comment>
<comment type="catalytic activity">
    <reaction evidence="1">
        <text>[ThiI sulfur-carrier protein]-S-sulfanyl-L-cysteine + a uridine in tRNA + 2 reduced [2Fe-2S]-[ferredoxin] + ATP + H(+) = [ThiI sulfur-carrier protein]-L-cysteine + a 4-thiouridine in tRNA + 2 oxidized [2Fe-2S]-[ferredoxin] + AMP + diphosphate</text>
        <dbReference type="Rhea" id="RHEA:24176"/>
        <dbReference type="Rhea" id="RHEA-COMP:10000"/>
        <dbReference type="Rhea" id="RHEA-COMP:10001"/>
        <dbReference type="Rhea" id="RHEA-COMP:13337"/>
        <dbReference type="Rhea" id="RHEA-COMP:13338"/>
        <dbReference type="Rhea" id="RHEA-COMP:13339"/>
        <dbReference type="Rhea" id="RHEA-COMP:13340"/>
        <dbReference type="ChEBI" id="CHEBI:15378"/>
        <dbReference type="ChEBI" id="CHEBI:29950"/>
        <dbReference type="ChEBI" id="CHEBI:30616"/>
        <dbReference type="ChEBI" id="CHEBI:33019"/>
        <dbReference type="ChEBI" id="CHEBI:33737"/>
        <dbReference type="ChEBI" id="CHEBI:33738"/>
        <dbReference type="ChEBI" id="CHEBI:61963"/>
        <dbReference type="ChEBI" id="CHEBI:65315"/>
        <dbReference type="ChEBI" id="CHEBI:136798"/>
        <dbReference type="ChEBI" id="CHEBI:456215"/>
        <dbReference type="EC" id="2.8.1.4"/>
    </reaction>
</comment>
<comment type="catalytic activity">
    <reaction evidence="1">
        <text>[ThiS sulfur-carrier protein]-C-terminal Gly-Gly-AMP + S-sulfanyl-L-cysteinyl-[cysteine desulfurase] + AH2 = [ThiS sulfur-carrier protein]-C-terminal-Gly-aminoethanethioate + L-cysteinyl-[cysteine desulfurase] + A + AMP + 2 H(+)</text>
        <dbReference type="Rhea" id="RHEA:43340"/>
        <dbReference type="Rhea" id="RHEA-COMP:12157"/>
        <dbReference type="Rhea" id="RHEA-COMP:12158"/>
        <dbReference type="Rhea" id="RHEA-COMP:12910"/>
        <dbReference type="Rhea" id="RHEA-COMP:19908"/>
        <dbReference type="ChEBI" id="CHEBI:13193"/>
        <dbReference type="ChEBI" id="CHEBI:15378"/>
        <dbReference type="ChEBI" id="CHEBI:17499"/>
        <dbReference type="ChEBI" id="CHEBI:29950"/>
        <dbReference type="ChEBI" id="CHEBI:61963"/>
        <dbReference type="ChEBI" id="CHEBI:90618"/>
        <dbReference type="ChEBI" id="CHEBI:232372"/>
        <dbReference type="ChEBI" id="CHEBI:456215"/>
    </reaction>
</comment>
<comment type="pathway">
    <text evidence="1">Cofactor biosynthesis; thiamine diphosphate biosynthesis.</text>
</comment>
<comment type="subcellular location">
    <subcellularLocation>
        <location evidence="1">Cytoplasm</location>
    </subcellularLocation>
</comment>
<comment type="similarity">
    <text evidence="1">Belongs to the ThiI family.</text>
</comment>
<dbReference type="EC" id="2.8.1.4" evidence="1"/>
<dbReference type="EMBL" id="CP001283">
    <property type="protein sequence ID" value="ACK92422.1"/>
    <property type="molecule type" value="Genomic_DNA"/>
</dbReference>
<dbReference type="RefSeq" id="WP_000989283.1">
    <property type="nucleotide sequence ID" value="NC_011773.1"/>
</dbReference>
<dbReference type="SMR" id="B7JS23"/>
<dbReference type="GeneID" id="45024520"/>
<dbReference type="KEGG" id="bcu:BCAH820_4765"/>
<dbReference type="HOGENOM" id="CLU_037952_4_0_9"/>
<dbReference type="UniPathway" id="UPA00060"/>
<dbReference type="Proteomes" id="UP000001363">
    <property type="component" value="Chromosome"/>
</dbReference>
<dbReference type="GO" id="GO:0005829">
    <property type="term" value="C:cytosol"/>
    <property type="evidence" value="ECO:0007669"/>
    <property type="project" value="TreeGrafter"/>
</dbReference>
<dbReference type="GO" id="GO:0005524">
    <property type="term" value="F:ATP binding"/>
    <property type="evidence" value="ECO:0007669"/>
    <property type="project" value="UniProtKB-UniRule"/>
</dbReference>
<dbReference type="GO" id="GO:0004810">
    <property type="term" value="F:CCA tRNA nucleotidyltransferase activity"/>
    <property type="evidence" value="ECO:0007669"/>
    <property type="project" value="InterPro"/>
</dbReference>
<dbReference type="GO" id="GO:0000049">
    <property type="term" value="F:tRNA binding"/>
    <property type="evidence" value="ECO:0007669"/>
    <property type="project" value="UniProtKB-UniRule"/>
</dbReference>
<dbReference type="GO" id="GO:0140741">
    <property type="term" value="F:tRNA-uracil-4 sulfurtransferase activity"/>
    <property type="evidence" value="ECO:0007669"/>
    <property type="project" value="UniProtKB-EC"/>
</dbReference>
<dbReference type="GO" id="GO:0009228">
    <property type="term" value="P:thiamine biosynthetic process"/>
    <property type="evidence" value="ECO:0007669"/>
    <property type="project" value="UniProtKB-KW"/>
</dbReference>
<dbReference type="GO" id="GO:0009229">
    <property type="term" value="P:thiamine diphosphate biosynthetic process"/>
    <property type="evidence" value="ECO:0007669"/>
    <property type="project" value="UniProtKB-UniRule"/>
</dbReference>
<dbReference type="GO" id="GO:0052837">
    <property type="term" value="P:thiazole biosynthetic process"/>
    <property type="evidence" value="ECO:0007669"/>
    <property type="project" value="TreeGrafter"/>
</dbReference>
<dbReference type="GO" id="GO:0002937">
    <property type="term" value="P:tRNA 4-thiouridine biosynthesis"/>
    <property type="evidence" value="ECO:0007669"/>
    <property type="project" value="TreeGrafter"/>
</dbReference>
<dbReference type="CDD" id="cd01712">
    <property type="entry name" value="PPase_ThiI"/>
    <property type="match status" value="1"/>
</dbReference>
<dbReference type="CDD" id="cd11716">
    <property type="entry name" value="THUMP_ThiI"/>
    <property type="match status" value="1"/>
</dbReference>
<dbReference type="FunFam" id="3.30.2130.30:FF:000003">
    <property type="entry name" value="Probable tRNA sulfurtransferase"/>
    <property type="match status" value="1"/>
</dbReference>
<dbReference type="FunFam" id="3.40.50.620:FF:000053">
    <property type="entry name" value="Probable tRNA sulfurtransferase"/>
    <property type="match status" value="1"/>
</dbReference>
<dbReference type="Gene3D" id="3.30.2130.30">
    <property type="match status" value="1"/>
</dbReference>
<dbReference type="Gene3D" id="3.40.50.620">
    <property type="entry name" value="HUPs"/>
    <property type="match status" value="1"/>
</dbReference>
<dbReference type="HAMAP" id="MF_00021">
    <property type="entry name" value="ThiI"/>
    <property type="match status" value="1"/>
</dbReference>
<dbReference type="InterPro" id="IPR014729">
    <property type="entry name" value="Rossmann-like_a/b/a_fold"/>
</dbReference>
<dbReference type="InterPro" id="IPR020536">
    <property type="entry name" value="ThiI_AANH"/>
</dbReference>
<dbReference type="InterPro" id="IPR054173">
    <property type="entry name" value="ThiI_fer"/>
</dbReference>
<dbReference type="InterPro" id="IPR049961">
    <property type="entry name" value="ThiI_N"/>
</dbReference>
<dbReference type="InterPro" id="IPR004114">
    <property type="entry name" value="THUMP_dom"/>
</dbReference>
<dbReference type="InterPro" id="IPR049962">
    <property type="entry name" value="THUMP_ThiI"/>
</dbReference>
<dbReference type="InterPro" id="IPR003720">
    <property type="entry name" value="tRNA_STrfase"/>
</dbReference>
<dbReference type="InterPro" id="IPR050102">
    <property type="entry name" value="tRNA_sulfurtransferase_ThiI"/>
</dbReference>
<dbReference type="NCBIfam" id="TIGR00342">
    <property type="entry name" value="tRNA uracil 4-sulfurtransferase ThiI"/>
    <property type="match status" value="1"/>
</dbReference>
<dbReference type="PANTHER" id="PTHR43209">
    <property type="entry name" value="TRNA SULFURTRANSFERASE"/>
    <property type="match status" value="1"/>
</dbReference>
<dbReference type="PANTHER" id="PTHR43209:SF1">
    <property type="entry name" value="TRNA SULFURTRANSFERASE"/>
    <property type="match status" value="1"/>
</dbReference>
<dbReference type="Pfam" id="PF02568">
    <property type="entry name" value="ThiI"/>
    <property type="match status" value="1"/>
</dbReference>
<dbReference type="Pfam" id="PF22025">
    <property type="entry name" value="ThiI_fer"/>
    <property type="match status" value="1"/>
</dbReference>
<dbReference type="Pfam" id="PF02926">
    <property type="entry name" value="THUMP"/>
    <property type="match status" value="1"/>
</dbReference>
<dbReference type="SMART" id="SM00981">
    <property type="entry name" value="THUMP"/>
    <property type="match status" value="1"/>
</dbReference>
<dbReference type="SUPFAM" id="SSF52402">
    <property type="entry name" value="Adenine nucleotide alpha hydrolases-like"/>
    <property type="match status" value="1"/>
</dbReference>
<dbReference type="SUPFAM" id="SSF143437">
    <property type="entry name" value="THUMP domain-like"/>
    <property type="match status" value="1"/>
</dbReference>
<dbReference type="PROSITE" id="PS51165">
    <property type="entry name" value="THUMP"/>
    <property type="match status" value="1"/>
</dbReference>
<sequence length="404" mass="45842">MMTYEYILVRYGEMTTKGKNRSKFVSTLKDNVKFKLKKFPNIKIDATHDRMYIQLNGEDHEAVSERLKDVFGIHKFNLAMKVPSELEDIKKGALAAFLQVKGDVKTFKITVHRSYKHFPMRTMELLPEIGGHILENTEDITVDVHNPDVNVRVEIRSGYSYIMCDERMGAGGLPVGVGGKVMVLLSGGIDSPVAAYLTMKRGVSVEAVHFHSPPFTSERAKQKVIDLAQELTKYCKRVTLHLVPFTEVQKTINKEIPSSYSMTVMRRMMMRITERIAEERNALAITTGESLGQVASQTLDSMHTINEVTNYPVIRPLITMDKLEIIKIAEEIGTYDISIRPYEDCCTVFTPASPATKPKREKANRFEAKYDFTPLIDEAVANKETMVLQTVEVVAEEEKFEELF</sequence>
<proteinExistence type="inferred from homology"/>
<evidence type="ECO:0000255" key="1">
    <source>
        <dbReference type="HAMAP-Rule" id="MF_00021"/>
    </source>
</evidence>
<gene>
    <name evidence="1" type="primary">thiI</name>
    <name type="ordered locus">BCAH820_4765</name>
</gene>
<keyword id="KW-0067">ATP-binding</keyword>
<keyword id="KW-0963">Cytoplasm</keyword>
<keyword id="KW-0547">Nucleotide-binding</keyword>
<keyword id="KW-0694">RNA-binding</keyword>
<keyword id="KW-0784">Thiamine biosynthesis</keyword>
<keyword id="KW-0808">Transferase</keyword>
<keyword id="KW-0820">tRNA-binding</keyword>
<accession>B7JS23</accession>
<reference key="1">
    <citation type="submission" date="2008-10" db="EMBL/GenBank/DDBJ databases">
        <title>Genome sequence of Bacillus cereus AH820.</title>
        <authorList>
            <person name="Dodson R.J."/>
            <person name="Durkin A.S."/>
            <person name="Rosovitz M.J."/>
            <person name="Rasko D.A."/>
            <person name="Hoffmaster A."/>
            <person name="Ravel J."/>
            <person name="Sutton G."/>
        </authorList>
    </citation>
    <scope>NUCLEOTIDE SEQUENCE [LARGE SCALE GENOMIC DNA]</scope>
    <source>
        <strain>AH820</strain>
    </source>
</reference>
<organism>
    <name type="scientific">Bacillus cereus (strain AH820)</name>
    <dbReference type="NCBI Taxonomy" id="405535"/>
    <lineage>
        <taxon>Bacteria</taxon>
        <taxon>Bacillati</taxon>
        <taxon>Bacillota</taxon>
        <taxon>Bacilli</taxon>
        <taxon>Bacillales</taxon>
        <taxon>Bacillaceae</taxon>
        <taxon>Bacillus</taxon>
        <taxon>Bacillus cereus group</taxon>
    </lineage>
</organism>